<gene>
    <name evidence="1" type="primary">hisC</name>
    <name type="ordered locus">Teth514_1002</name>
</gene>
<organism>
    <name type="scientific">Thermoanaerobacter sp. (strain X514)</name>
    <dbReference type="NCBI Taxonomy" id="399726"/>
    <lineage>
        <taxon>Bacteria</taxon>
        <taxon>Bacillati</taxon>
        <taxon>Bacillota</taxon>
        <taxon>Clostridia</taxon>
        <taxon>Thermoanaerobacterales</taxon>
        <taxon>Thermoanaerobacteraceae</taxon>
        <taxon>Thermoanaerobacter</taxon>
    </lineage>
</organism>
<feature type="chain" id="PRO_1000135428" description="Histidinol-phosphate aminotransferase">
    <location>
        <begin position="1"/>
        <end position="351"/>
    </location>
</feature>
<feature type="modified residue" description="N6-(pyridoxal phosphate)lysine" evidence="1">
    <location>
        <position position="213"/>
    </location>
</feature>
<protein>
    <recommendedName>
        <fullName evidence="1">Histidinol-phosphate aminotransferase</fullName>
        <ecNumber evidence="1">2.6.1.9</ecNumber>
    </recommendedName>
    <alternativeName>
        <fullName evidence="1">Imidazole acetol-phosphate transaminase</fullName>
    </alternativeName>
</protein>
<evidence type="ECO:0000255" key="1">
    <source>
        <dbReference type="HAMAP-Rule" id="MF_01023"/>
    </source>
</evidence>
<name>HIS8_THEPX</name>
<reference key="1">
    <citation type="submission" date="2008-01" db="EMBL/GenBank/DDBJ databases">
        <title>Complete sequence of Thermoanaerobacter sp. X514.</title>
        <authorList>
            <consortium name="US DOE Joint Genome Institute"/>
            <person name="Copeland A."/>
            <person name="Lucas S."/>
            <person name="Lapidus A."/>
            <person name="Barry K."/>
            <person name="Glavina del Rio T."/>
            <person name="Dalin E."/>
            <person name="Tice H."/>
            <person name="Pitluck S."/>
            <person name="Bruce D."/>
            <person name="Goodwin L."/>
            <person name="Saunders E."/>
            <person name="Brettin T."/>
            <person name="Detter J.C."/>
            <person name="Han C."/>
            <person name="Schmutz J."/>
            <person name="Larimer F."/>
            <person name="Land M."/>
            <person name="Hauser L."/>
            <person name="Kyrpides N."/>
            <person name="Kim E."/>
            <person name="Hemme C."/>
            <person name="Fields M.W."/>
            <person name="He Z."/>
            <person name="Zhou J."/>
            <person name="Richardson P."/>
        </authorList>
    </citation>
    <scope>NUCLEOTIDE SEQUENCE [LARGE SCALE GENOMIC DNA]</scope>
    <source>
        <strain>X514</strain>
    </source>
</reference>
<sequence length="351" mass="39963">MIENLVREEIKGFKNYEVHSIPYRYKMDANETPFELPEEVIKNIQEIVKSSQVNVYPDPTAEKLKEELARYCGVVPTNIFVGNGSDEIIHLIMLAFINKGDVVAYPHPSFAMYSVYSKIAGAVEIPVRLREDYNYDVDSFIKVIEKYQPKLVFLCNPNNPTGSVIEREDIIKIIQKSNGIVVVDEAYFEFYGNTIVDAINEFENLIVLRTLSKAFGLAGLRVGYAVANENILKYLNLVKSPYNINSLSQIIALKVLRTDVLKERINYILEERKRLIKELGKIPGVKVYPSKTNFILVKFKDADYVYQGLLERGILVRDFSKVEGLEGALRITVSSCEANDYLINGLKELLL</sequence>
<accession>B0K625</accession>
<dbReference type="EC" id="2.6.1.9" evidence="1"/>
<dbReference type="EMBL" id="CP000923">
    <property type="protein sequence ID" value="ABY92301.1"/>
    <property type="molecule type" value="Genomic_DNA"/>
</dbReference>
<dbReference type="RefSeq" id="WP_009052790.1">
    <property type="nucleotide sequence ID" value="NC_010320.1"/>
</dbReference>
<dbReference type="SMR" id="B0K625"/>
<dbReference type="KEGG" id="tex:Teth514_1002"/>
<dbReference type="HOGENOM" id="CLU_017584_3_1_9"/>
<dbReference type="UniPathway" id="UPA00031">
    <property type="reaction ID" value="UER00012"/>
</dbReference>
<dbReference type="Proteomes" id="UP000002155">
    <property type="component" value="Chromosome"/>
</dbReference>
<dbReference type="GO" id="GO:0004400">
    <property type="term" value="F:histidinol-phosphate transaminase activity"/>
    <property type="evidence" value="ECO:0007669"/>
    <property type="project" value="UniProtKB-UniRule"/>
</dbReference>
<dbReference type="GO" id="GO:0030170">
    <property type="term" value="F:pyridoxal phosphate binding"/>
    <property type="evidence" value="ECO:0007669"/>
    <property type="project" value="InterPro"/>
</dbReference>
<dbReference type="GO" id="GO:0000105">
    <property type="term" value="P:L-histidine biosynthetic process"/>
    <property type="evidence" value="ECO:0007669"/>
    <property type="project" value="UniProtKB-UniRule"/>
</dbReference>
<dbReference type="CDD" id="cd00609">
    <property type="entry name" value="AAT_like"/>
    <property type="match status" value="1"/>
</dbReference>
<dbReference type="Gene3D" id="3.90.1150.10">
    <property type="entry name" value="Aspartate Aminotransferase, domain 1"/>
    <property type="match status" value="1"/>
</dbReference>
<dbReference type="Gene3D" id="3.40.640.10">
    <property type="entry name" value="Type I PLP-dependent aspartate aminotransferase-like (Major domain)"/>
    <property type="match status" value="1"/>
</dbReference>
<dbReference type="HAMAP" id="MF_01023">
    <property type="entry name" value="HisC_aminotrans_2"/>
    <property type="match status" value="1"/>
</dbReference>
<dbReference type="InterPro" id="IPR001917">
    <property type="entry name" value="Aminotrans_II_pyridoxalP_BS"/>
</dbReference>
<dbReference type="InterPro" id="IPR004839">
    <property type="entry name" value="Aminotransferase_I/II_large"/>
</dbReference>
<dbReference type="InterPro" id="IPR005861">
    <property type="entry name" value="HisP_aminotrans"/>
</dbReference>
<dbReference type="InterPro" id="IPR015424">
    <property type="entry name" value="PyrdxlP-dep_Trfase"/>
</dbReference>
<dbReference type="InterPro" id="IPR015421">
    <property type="entry name" value="PyrdxlP-dep_Trfase_major"/>
</dbReference>
<dbReference type="InterPro" id="IPR015422">
    <property type="entry name" value="PyrdxlP-dep_Trfase_small"/>
</dbReference>
<dbReference type="NCBIfam" id="TIGR01141">
    <property type="entry name" value="hisC"/>
    <property type="match status" value="1"/>
</dbReference>
<dbReference type="PANTHER" id="PTHR42885:SF2">
    <property type="entry name" value="HISTIDINOL-PHOSPHATE AMINOTRANSFERASE"/>
    <property type="match status" value="1"/>
</dbReference>
<dbReference type="PANTHER" id="PTHR42885">
    <property type="entry name" value="HISTIDINOL-PHOSPHATE AMINOTRANSFERASE-RELATED"/>
    <property type="match status" value="1"/>
</dbReference>
<dbReference type="Pfam" id="PF00155">
    <property type="entry name" value="Aminotran_1_2"/>
    <property type="match status" value="1"/>
</dbReference>
<dbReference type="SUPFAM" id="SSF53383">
    <property type="entry name" value="PLP-dependent transferases"/>
    <property type="match status" value="1"/>
</dbReference>
<dbReference type="PROSITE" id="PS00599">
    <property type="entry name" value="AA_TRANSFER_CLASS_2"/>
    <property type="match status" value="1"/>
</dbReference>
<proteinExistence type="inferred from homology"/>
<comment type="catalytic activity">
    <reaction evidence="1">
        <text>L-histidinol phosphate + 2-oxoglutarate = 3-(imidazol-4-yl)-2-oxopropyl phosphate + L-glutamate</text>
        <dbReference type="Rhea" id="RHEA:23744"/>
        <dbReference type="ChEBI" id="CHEBI:16810"/>
        <dbReference type="ChEBI" id="CHEBI:29985"/>
        <dbReference type="ChEBI" id="CHEBI:57766"/>
        <dbReference type="ChEBI" id="CHEBI:57980"/>
        <dbReference type="EC" id="2.6.1.9"/>
    </reaction>
</comment>
<comment type="cofactor">
    <cofactor evidence="1">
        <name>pyridoxal 5'-phosphate</name>
        <dbReference type="ChEBI" id="CHEBI:597326"/>
    </cofactor>
</comment>
<comment type="pathway">
    <text evidence="1">Amino-acid biosynthesis; L-histidine biosynthesis; L-histidine from 5-phospho-alpha-D-ribose 1-diphosphate: step 7/9.</text>
</comment>
<comment type="subunit">
    <text evidence="1">Homodimer.</text>
</comment>
<comment type="similarity">
    <text evidence="1">Belongs to the class-II pyridoxal-phosphate-dependent aminotransferase family. Histidinol-phosphate aminotransferase subfamily.</text>
</comment>
<keyword id="KW-0028">Amino-acid biosynthesis</keyword>
<keyword id="KW-0032">Aminotransferase</keyword>
<keyword id="KW-0368">Histidine biosynthesis</keyword>
<keyword id="KW-0663">Pyridoxal phosphate</keyword>
<keyword id="KW-0808">Transferase</keyword>